<sequence>MAGRWNLEGCTALVTGGSRGIGYGIVEELASLGASVYTCSRNQKELNDCLTQWRSKGFKVEASVCDLSSRSERQELMNTVANHFHGKLNILVNNAGIVIYKEAKDYTVEDYSLIMSINFEAAYHLSVLAHPFLKASERGNVVFISSVSGALAVPYEAVYGATKGAMDQLTRCLAFEWAKDNIRVNGVGPGVIATSLVEMTIQDPEQKENLNKLIDRCALRRMGEPKELAAMVAFLCFPAASYVTGQIIYVDGGLMANCGF</sequence>
<keyword id="KW-0002">3D-structure</keyword>
<keyword id="KW-0521">NADP</keyword>
<keyword id="KW-0560">Oxidoreductase</keyword>
<accession>P50163</accession>
<feature type="chain" id="PRO_0000054786" description="Tropinone reductase 2">
    <location>
        <begin position="1"/>
        <end position="260"/>
    </location>
</feature>
<feature type="active site" description="Proton acceptor">
    <location>
        <position position="159"/>
    </location>
</feature>
<feature type="binding site" evidence="1">
    <location>
        <begin position="18"/>
        <end position="41"/>
    </location>
    <ligand>
        <name>NADP(+)</name>
        <dbReference type="ChEBI" id="CHEBI:58349"/>
    </ligand>
</feature>
<feature type="binding site" evidence="1">
    <location>
        <position position="146"/>
    </location>
    <ligand>
        <name>substrate</name>
    </ligand>
</feature>
<feature type="binding site" evidence="1">
    <location>
        <begin position="192"/>
        <end position="196"/>
    </location>
    <ligand>
        <name>NADP(+)</name>
        <dbReference type="ChEBI" id="CHEBI:58349"/>
    </ligand>
</feature>
<feature type="strand" evidence="4">
    <location>
        <begin position="11"/>
        <end position="16"/>
    </location>
</feature>
<feature type="helix" evidence="4">
    <location>
        <begin position="20"/>
        <end position="31"/>
    </location>
</feature>
<feature type="strand" evidence="4">
    <location>
        <begin position="35"/>
        <end position="41"/>
    </location>
</feature>
<feature type="helix" evidence="4">
    <location>
        <begin position="43"/>
        <end position="55"/>
    </location>
</feature>
<feature type="strand" evidence="4">
    <location>
        <begin position="59"/>
        <end position="64"/>
    </location>
</feature>
<feature type="helix" evidence="4">
    <location>
        <begin position="70"/>
        <end position="83"/>
    </location>
</feature>
<feature type="turn" evidence="4">
    <location>
        <begin position="84"/>
        <end position="86"/>
    </location>
</feature>
<feature type="strand" evidence="4">
    <location>
        <begin position="90"/>
        <end position="93"/>
    </location>
</feature>
<feature type="helix" evidence="4">
    <location>
        <begin position="103"/>
        <end position="105"/>
    </location>
</feature>
<feature type="helix" evidence="4">
    <location>
        <begin position="108"/>
        <end position="118"/>
    </location>
</feature>
<feature type="helix" evidence="4">
    <location>
        <begin position="120"/>
        <end position="135"/>
    </location>
</feature>
<feature type="strand" evidence="4">
    <location>
        <begin position="137"/>
        <end position="144"/>
    </location>
</feature>
<feature type="helix" evidence="4">
    <location>
        <begin position="147"/>
        <end position="149"/>
    </location>
</feature>
<feature type="helix" evidence="4">
    <location>
        <begin position="157"/>
        <end position="176"/>
    </location>
</feature>
<feature type="helix" evidence="4">
    <location>
        <begin position="178"/>
        <end position="180"/>
    </location>
</feature>
<feature type="strand" evidence="4">
    <location>
        <begin position="182"/>
        <end position="189"/>
    </location>
</feature>
<feature type="helix" evidence="4">
    <location>
        <begin position="195"/>
        <end position="200"/>
    </location>
</feature>
<feature type="helix" evidence="4">
    <location>
        <begin position="204"/>
        <end position="215"/>
    </location>
</feature>
<feature type="strand" evidence="3">
    <location>
        <begin position="217"/>
        <end position="219"/>
    </location>
</feature>
<feature type="helix" evidence="4">
    <location>
        <begin position="225"/>
        <end position="236"/>
    </location>
</feature>
<feature type="helix" evidence="4">
    <location>
        <begin position="238"/>
        <end position="240"/>
    </location>
</feature>
<feature type="strand" evidence="4">
    <location>
        <begin position="247"/>
        <end position="251"/>
    </location>
</feature>
<feature type="helix" evidence="4">
    <location>
        <begin position="254"/>
        <end position="256"/>
    </location>
</feature>
<proteinExistence type="evidence at protein level"/>
<gene>
    <name type="primary">TR2</name>
</gene>
<comment type="function">
    <text>Catalyzes the stereospecific reduction of tropinone to pseudotropine.</text>
</comment>
<comment type="catalytic activity">
    <reaction>
        <text>pseudotropine + NADP(+) = tropinone + NADPH + H(+)</text>
        <dbReference type="Rhea" id="RHEA:24244"/>
        <dbReference type="ChEBI" id="CHEBI:15378"/>
        <dbReference type="ChEBI" id="CHEBI:57493"/>
        <dbReference type="ChEBI" id="CHEBI:57783"/>
        <dbReference type="ChEBI" id="CHEBI:57851"/>
        <dbReference type="ChEBI" id="CHEBI:58349"/>
        <dbReference type="EC" id="1.1.1.236"/>
    </reaction>
</comment>
<comment type="pathway">
    <text>Alkaloid biosynthesis; tropane alkaloid biosynthesis.</text>
</comment>
<comment type="subunit">
    <text evidence="1">Homodimer.</text>
</comment>
<comment type="similarity">
    <text evidence="2">Belongs to the short-chain dehydrogenases/reductases (SDR) family.</text>
</comment>
<name>TRN2_DATST</name>
<dbReference type="EC" id="1.1.1.236"/>
<dbReference type="EMBL" id="L20474">
    <property type="protein sequence ID" value="AAA33282.1"/>
    <property type="molecule type" value="mRNA"/>
</dbReference>
<dbReference type="PIR" id="B48674">
    <property type="entry name" value="B48674"/>
</dbReference>
<dbReference type="PDB" id="1IPE">
    <property type="method" value="X-ray"/>
    <property type="resolution" value="2.50 A"/>
    <property type="chains" value="A/B=2-260"/>
</dbReference>
<dbReference type="PDB" id="1IPF">
    <property type="method" value="X-ray"/>
    <property type="resolution" value="2.50 A"/>
    <property type="chains" value="A/B=2-260"/>
</dbReference>
<dbReference type="PDB" id="2AE1">
    <property type="method" value="X-ray"/>
    <property type="resolution" value="2.30 A"/>
    <property type="chains" value="A=1-260"/>
</dbReference>
<dbReference type="PDB" id="2AE2">
    <property type="method" value="X-ray"/>
    <property type="resolution" value="1.90 A"/>
    <property type="chains" value="A/B=1-260"/>
</dbReference>
<dbReference type="PDBsum" id="1IPE"/>
<dbReference type="PDBsum" id="1IPF"/>
<dbReference type="PDBsum" id="2AE1"/>
<dbReference type="PDBsum" id="2AE2"/>
<dbReference type="SMR" id="P50163"/>
<dbReference type="KEGG" id="ag:AAA33282"/>
<dbReference type="BioCyc" id="MetaCyc:MONOMER-13851"/>
<dbReference type="BRENDA" id="1.1.1.236">
    <property type="organism ID" value="1839"/>
</dbReference>
<dbReference type="SABIO-RK" id="P50163"/>
<dbReference type="UniPathway" id="UPA00330"/>
<dbReference type="EvolutionaryTrace" id="P50163"/>
<dbReference type="GO" id="GO:0050358">
    <property type="term" value="F:tropinone reductase activity"/>
    <property type="evidence" value="ECO:0007669"/>
    <property type="project" value="UniProtKB-EC"/>
</dbReference>
<dbReference type="GO" id="GO:0009710">
    <property type="term" value="P:tropane alkaloid biosynthetic process"/>
    <property type="evidence" value="ECO:0007669"/>
    <property type="project" value="UniProtKB-UniPathway"/>
</dbReference>
<dbReference type="CDD" id="cd05329">
    <property type="entry name" value="TR_SDR_c"/>
    <property type="match status" value="1"/>
</dbReference>
<dbReference type="FunFam" id="3.40.50.720:FF:000084">
    <property type="entry name" value="Short-chain dehydrogenase reductase"/>
    <property type="match status" value="1"/>
</dbReference>
<dbReference type="Gene3D" id="3.40.50.720">
    <property type="entry name" value="NAD(P)-binding Rossmann-like Domain"/>
    <property type="match status" value="1"/>
</dbReference>
<dbReference type="InterPro" id="IPR036291">
    <property type="entry name" value="NAD(P)-bd_dom_sf"/>
</dbReference>
<dbReference type="InterPro" id="IPR020904">
    <property type="entry name" value="Sc_DH/Rdtase_CS"/>
</dbReference>
<dbReference type="InterPro" id="IPR002347">
    <property type="entry name" value="SDR_fam"/>
</dbReference>
<dbReference type="InterPro" id="IPR045000">
    <property type="entry name" value="TR"/>
</dbReference>
<dbReference type="PANTHER" id="PTHR42898">
    <property type="entry name" value="TROPINONE REDUCTASE"/>
    <property type="match status" value="1"/>
</dbReference>
<dbReference type="PANTHER" id="PTHR42898:SF55">
    <property type="entry name" value="TROPINONE REDUCTASE II"/>
    <property type="match status" value="1"/>
</dbReference>
<dbReference type="Pfam" id="PF13561">
    <property type="entry name" value="adh_short_C2"/>
    <property type="match status" value="1"/>
</dbReference>
<dbReference type="PRINTS" id="PR00081">
    <property type="entry name" value="GDHRDH"/>
</dbReference>
<dbReference type="PRINTS" id="PR00080">
    <property type="entry name" value="SDRFAMILY"/>
</dbReference>
<dbReference type="SUPFAM" id="SSF51735">
    <property type="entry name" value="NAD(P)-binding Rossmann-fold domains"/>
    <property type="match status" value="1"/>
</dbReference>
<dbReference type="PROSITE" id="PS00061">
    <property type="entry name" value="ADH_SHORT"/>
    <property type="match status" value="1"/>
</dbReference>
<protein>
    <recommendedName>
        <fullName>Tropinone reductase 2</fullName>
        <ecNumber>1.1.1.236</ecNumber>
    </recommendedName>
    <alternativeName>
        <fullName>Tropinone reductase II</fullName>
        <shortName>TR-II</shortName>
    </alternativeName>
</protein>
<evidence type="ECO:0000269" key="1">
    <source>
    </source>
</evidence>
<evidence type="ECO:0000305" key="2"/>
<evidence type="ECO:0007829" key="3">
    <source>
        <dbReference type="PDB" id="2AE1"/>
    </source>
</evidence>
<evidence type="ECO:0007829" key="4">
    <source>
        <dbReference type="PDB" id="2AE2"/>
    </source>
</evidence>
<organism>
    <name type="scientific">Datura stramonium</name>
    <name type="common">Jimsonweed</name>
    <name type="synonym">Common thornapple</name>
    <dbReference type="NCBI Taxonomy" id="4076"/>
    <lineage>
        <taxon>Eukaryota</taxon>
        <taxon>Viridiplantae</taxon>
        <taxon>Streptophyta</taxon>
        <taxon>Embryophyta</taxon>
        <taxon>Tracheophyta</taxon>
        <taxon>Spermatophyta</taxon>
        <taxon>Magnoliopsida</taxon>
        <taxon>eudicotyledons</taxon>
        <taxon>Gunneridae</taxon>
        <taxon>Pentapetalae</taxon>
        <taxon>asterids</taxon>
        <taxon>lamiids</taxon>
        <taxon>Solanales</taxon>
        <taxon>Solanaceae</taxon>
        <taxon>Solanoideae</taxon>
        <taxon>Datureae</taxon>
        <taxon>Datura</taxon>
    </lineage>
</organism>
<reference key="1">
    <citation type="journal article" date="1993" name="Proc. Natl. Acad. Sci. U.S.A.">
        <title>Two tropinone reductases with different stereospecificities are short-chain dehydrogenases evolved from a common ancestor.</title>
        <authorList>
            <person name="Nakajima K."/>
            <person name="Hashimoto T."/>
            <person name="Yamada Y."/>
        </authorList>
    </citation>
    <scope>NUCLEOTIDE SEQUENCE [MRNA]</scope>
    <source>
        <tissue>Root</tissue>
    </source>
</reference>
<reference key="2">
    <citation type="journal article" date="1998" name="Proc. Natl. Acad. Sci. U.S.A.">
        <title>Crystal structures of two tropinone reductases: different reaction stereospecificities in the same protein fold.</title>
        <authorList>
            <person name="Nakajima K."/>
            <person name="Yamashita A."/>
            <person name="Akama H."/>
            <person name="Nakatsu T."/>
            <person name="Kato H."/>
            <person name="Hashimoto T."/>
            <person name="Oda J."/>
            <person name="Yamada Y."/>
        </authorList>
    </citation>
    <scope>X-RAY CRYSTALLOGRAPHY (2.3 ANGSTROMS)</scope>
</reference>
<reference key="3">
    <citation type="journal article" date="1999" name="Biochemistry">
        <title>Structure of tropinone reductase-II complexed with NADP+ and pseudotropine at 1.9 A resolution: implication for stereospecific substrate binding and catalysis.</title>
        <authorList>
            <person name="Yamashita A."/>
            <person name="Kato H."/>
            <person name="Wakatsuki S."/>
            <person name="Tomizaki T."/>
            <person name="Nakatsu T."/>
            <person name="Nakajima K."/>
            <person name="Hashimoto T."/>
            <person name="Yamada Y."/>
            <person name="Oda J."/>
        </authorList>
    </citation>
    <scope>X-RAY CRYSTALLOGRAPHY (1.9 ANGSTROMS) IN COMPLEX WITH NADP AND SUBSTRATE</scope>
</reference>